<sequence length="418" mass="46748">MKHSSDICIVGAGISGLTCASHLLDSPACRGLSLRIFDMQQEAGGRIRSKMLDGKASIELGAGRYSPQLHPHFQSAMQHYSQKSEVYPFTQLKFKSHVQQKLKRAMNELSPRLKEHGKESFLQFVSRYQGHDSAVGMIRSMGYDALFLPDISAEMAYDIVGKHPEIQSVTDNDANQWFAAETGFAGLIQGIKAKVKAAGARFSLGYRLLSVRTDGDGYLLQLAGDDGWKLEHRTRHLILAIPPSAMAGLNVDFPEAWSGARYGSLPLFKGFLTYGEPWWLDYKLDDQVLIVDNPLRKIYFKGDKYLFFYTDSEMANYWRGCVAEGEDGYLEQIRTHLASALGIVRERIPQPLAHVHKYWAHGVEFCRDSDIDHPSALSHRDSGIIACSDAYTEHCGWMEGGLLSAREASRLLLQRIAA</sequence>
<organism>
    <name type="scientific">Chromobacterium violaceum (strain ATCC 12472 / DSM 30191 / JCM 1249 / CCUG 213 / NBRC 12614 / NCIMB 9131 / NCTC 9757 / MK)</name>
    <dbReference type="NCBI Taxonomy" id="243365"/>
    <lineage>
        <taxon>Bacteria</taxon>
        <taxon>Pseudomonadati</taxon>
        <taxon>Pseudomonadota</taxon>
        <taxon>Betaproteobacteria</taxon>
        <taxon>Neisseriales</taxon>
        <taxon>Chromobacteriaceae</taxon>
        <taxon>Chromobacterium</taxon>
    </lineage>
</organism>
<protein>
    <recommendedName>
        <fullName>Flavin-dependent L-tryptophan oxidase VioA</fullName>
        <ecNumber evidence="1">1.4.3.23</ecNumber>
    </recommendedName>
</protein>
<evidence type="ECO:0000269" key="1">
    <source>
    </source>
</evidence>
<evidence type="ECO:0000305" key="2"/>
<evidence type="ECO:0007829" key="3">
    <source>
        <dbReference type="PDB" id="5G3T"/>
    </source>
</evidence>
<evidence type="ECO:0007829" key="4">
    <source>
        <dbReference type="PDB" id="6ESD"/>
    </source>
</evidence>
<evidence type="ECO:0007829" key="5">
    <source>
        <dbReference type="PDB" id="6FW7"/>
    </source>
</evidence>
<accession>Q9S3V1</accession>
<accession>Q9S0N5</accession>
<reference key="1">
    <citation type="journal article" date="2000" name="J. Mol. Microbiol. Biotechnol.">
        <title>Sequence analysis and functional characterization of the violacein biosynthetic pathway from Chromobacterium violaceum.</title>
        <authorList>
            <person name="August P.R."/>
            <person name="Grossman T.H."/>
            <person name="Minor C."/>
            <person name="Draper M.P."/>
            <person name="MacNeil I.A."/>
            <person name="Pemberton J.M."/>
            <person name="Call K.M."/>
            <person name="Holt D."/>
            <person name="Osburne M.S."/>
        </authorList>
    </citation>
    <scope>NUCLEOTIDE SEQUENCE [GENOMIC DNA]</scope>
    <source>
        <strain>UQM51</strain>
    </source>
</reference>
<reference key="2">
    <citation type="submission" date="1999-09" db="EMBL/GenBank/DDBJ databases">
        <title>Biosynthetic gene cluster for violacein pigment.</title>
        <authorList>
            <person name="Hoshino T."/>
        </authorList>
    </citation>
    <scope>NUCLEOTIDE SEQUENCE [GENOMIC DNA]</scope>
    <source>
        <strain>ATCC 12472 / DSM 30191 / JCM 1249 / CCUG 213 / NBRC 12614 / NCIMB 9131 / NCTC 9757 / MK</strain>
    </source>
</reference>
<reference key="3">
    <citation type="journal article" date="2003" name="Proc. Natl. Acad. Sci. U.S.A.">
        <title>The complete genome sequence of Chromobacterium violaceum reveals remarkable and exploitable bacterial adaptability.</title>
        <authorList>
            <person name="Vasconcelos A.T.R."/>
            <person name="de Almeida D.F."/>
            <person name="Hungria M."/>
            <person name="Guimaraes C.T."/>
            <person name="Antonio R.V."/>
            <person name="Almeida F.C."/>
            <person name="de Almeida L.G.P."/>
            <person name="de Almeida R."/>
            <person name="Alves-Gomes J.A."/>
            <person name="Andrade E.M."/>
            <person name="Araripe J."/>
            <person name="de Araujo M.F.F."/>
            <person name="Astolfi-Filho S."/>
            <person name="Azevedo V."/>
            <person name="Baptista A.J."/>
            <person name="Bataus L.A.M."/>
            <person name="Batista J.S."/>
            <person name="Belo A."/>
            <person name="van den Berg C."/>
            <person name="Bogo M."/>
            <person name="Bonatto S."/>
            <person name="Bordignon J."/>
            <person name="Brigido M.M."/>
            <person name="Brito C.A."/>
            <person name="Brocchi M."/>
            <person name="Burity H.A."/>
            <person name="Camargo A.A."/>
            <person name="Cardoso D.D.P."/>
            <person name="Carneiro N.P."/>
            <person name="Carraro D.M."/>
            <person name="Carvalho C.M.B."/>
            <person name="Cascardo J.C.M."/>
            <person name="Cavada B.S."/>
            <person name="Chueire L.M.O."/>
            <person name="Creczynski-Pasa T.B."/>
            <person name="Cunha-Junior N.C."/>
            <person name="Fagundes N."/>
            <person name="Falcao C.L."/>
            <person name="Fantinatti F."/>
            <person name="Farias I.P."/>
            <person name="Felipe M.S.S."/>
            <person name="Ferrari L.P."/>
            <person name="Ferro J.A."/>
            <person name="Ferro M.I.T."/>
            <person name="Franco G.R."/>
            <person name="Freitas N.S.A."/>
            <person name="Furlan L.R."/>
            <person name="Gazzinelli R.T."/>
            <person name="Gomes E.A."/>
            <person name="Goncalves P.R."/>
            <person name="Grangeiro T.B."/>
            <person name="Grattapaglia D."/>
            <person name="Grisard E.C."/>
            <person name="Hanna E.S."/>
            <person name="Jardim S.N."/>
            <person name="Laurino J."/>
            <person name="Leoi L.C.T."/>
            <person name="Lima L.F.A."/>
            <person name="Loureiro M.F."/>
            <person name="Lyra M.C.C.P."/>
            <person name="Madeira H.M.F."/>
            <person name="Manfio G.P."/>
            <person name="Maranhao A.Q."/>
            <person name="Martins W.S."/>
            <person name="di Mauro S.M.Z."/>
            <person name="de Medeiros S.R.B."/>
            <person name="Meissner R.V."/>
            <person name="Moreira M.A.M."/>
            <person name="Nascimento F.F."/>
            <person name="Nicolas M.F."/>
            <person name="Oliveira J.G."/>
            <person name="Oliveira S.C."/>
            <person name="Paixao R.F.C."/>
            <person name="Parente J.A."/>
            <person name="Pedrosa F.O."/>
            <person name="Pena S.D.J."/>
            <person name="Pereira J.O."/>
            <person name="Pereira M."/>
            <person name="Pinto L.S.R.C."/>
            <person name="Pinto L.S."/>
            <person name="Porto J.I.R."/>
            <person name="Potrich D.P."/>
            <person name="Ramalho-Neto C.E."/>
            <person name="Reis A.M.M."/>
            <person name="Rigo L.U."/>
            <person name="Rondinelli E."/>
            <person name="Santos E.B.P."/>
            <person name="Santos F.R."/>
            <person name="Schneider M.P.C."/>
            <person name="Seuanez H.N."/>
            <person name="Silva A.M.R."/>
            <person name="da Silva A.L.C."/>
            <person name="Silva D.W."/>
            <person name="Silva R."/>
            <person name="Simoes I.C."/>
            <person name="Simon D."/>
            <person name="Soares C.M.A."/>
            <person name="Soares R.B.A."/>
            <person name="Souza E.M."/>
            <person name="Souza K.R.L."/>
            <person name="Souza R.C."/>
            <person name="Steffens M.B.R."/>
            <person name="Steindel M."/>
            <person name="Teixeira S.R."/>
            <person name="Urmenyi T."/>
            <person name="Vettore A."/>
            <person name="Wassem R."/>
            <person name="Zaha A."/>
            <person name="Simpson A.J.G."/>
        </authorList>
    </citation>
    <scope>NUCLEOTIDE SEQUENCE [LARGE SCALE GENOMIC DNA]</scope>
    <source>
        <strain>ATCC 12472 / DSM 30191 / JCM 1249 / CCUG 213 / NBRC 12614 / NCIMB 9131 / NCTC 9757 / MK</strain>
    </source>
</reference>
<reference key="4">
    <citation type="journal article" date="2016" name="J. Biol. Chem.">
        <title>Biosynthesis of violacein, structure and function of L-tryptophan oxidase VioA from Chromobacterium violaceum.</title>
        <authorList>
            <person name="Fuller J.J."/>
            <person name="Ropke R."/>
            <person name="Krausze J."/>
            <person name="Rennhack K.E."/>
            <person name="Daniel N.P."/>
            <person name="Blankenfeldt W."/>
            <person name="Schulz S."/>
            <person name="Jahn D."/>
            <person name="Moser J."/>
        </authorList>
    </citation>
    <scope>X-RAY CRYSTALLOGRAPHY (1.80 ANGSTROMS) OF APOENZYME AND IN COMPLEX WITH FADH(2) AND INHIBITOR</scope>
    <scope>COFACTOR</scope>
    <scope>FUNCTION</scope>
    <scope>CATALYTIC ACTIVITY</scope>
    <scope>SUBUNIT</scope>
    <scope>SUBSTRATE SPECIFICITY</scope>
    <scope>MUTAGENESIS OF ARG-64; HIS-163; LYS-269; TYR-309; VAL-363 AND TRP-397</scope>
</reference>
<feature type="chain" id="PRO_0000099880" description="Flavin-dependent L-tryptophan oxidase VioA">
    <location>
        <begin position="1"/>
        <end position="418"/>
    </location>
</feature>
<feature type="binding site" evidence="1">
    <location>
        <position position="13"/>
    </location>
    <ligand>
        <name>Mg(2+)</name>
        <dbReference type="ChEBI" id="CHEBI:18420"/>
    </ligand>
</feature>
<feature type="binding site" evidence="1">
    <location>
        <position position="15"/>
    </location>
    <ligand>
        <name>FAD</name>
        <dbReference type="ChEBI" id="CHEBI:57692"/>
    </ligand>
</feature>
<feature type="binding site" evidence="1">
    <location>
        <position position="16"/>
    </location>
    <ligand>
        <name>Mg(2+)</name>
        <dbReference type="ChEBI" id="CHEBI:18420"/>
    </ligand>
</feature>
<feature type="binding site" evidence="1">
    <location>
        <position position="38"/>
    </location>
    <ligand>
        <name>FAD</name>
        <dbReference type="ChEBI" id="CHEBI:57692"/>
    </ligand>
</feature>
<feature type="binding site" evidence="1">
    <location>
        <position position="46"/>
    </location>
    <ligand>
        <name>FAD</name>
        <dbReference type="ChEBI" id="CHEBI:57692"/>
    </ligand>
</feature>
<feature type="binding site" evidence="1">
    <location>
        <position position="64"/>
    </location>
    <ligand>
        <name>FAD</name>
        <dbReference type="ChEBI" id="CHEBI:57692"/>
    </ligand>
</feature>
<feature type="binding site" evidence="1">
    <location>
        <position position="64"/>
    </location>
    <ligand>
        <name>substrate</name>
    </ligand>
</feature>
<feature type="binding site" evidence="1">
    <location>
        <position position="163"/>
    </location>
    <ligand>
        <name>substrate</name>
    </ligand>
</feature>
<feature type="binding site" evidence="1">
    <location>
        <position position="208"/>
    </location>
    <ligand>
        <name>FAD</name>
        <dbReference type="ChEBI" id="CHEBI:57692"/>
    </ligand>
</feature>
<feature type="binding site" evidence="1">
    <location>
        <position position="240"/>
    </location>
    <ligand>
        <name>Mg(2+)</name>
        <dbReference type="ChEBI" id="CHEBI:18420"/>
    </ligand>
</feature>
<feature type="binding site" evidence="1">
    <location>
        <position position="309"/>
    </location>
    <ligand>
        <name>substrate</name>
    </ligand>
</feature>
<feature type="binding site" evidence="1">
    <location>
        <position position="398"/>
    </location>
    <ligand>
        <name>FAD</name>
        <dbReference type="ChEBI" id="CHEBI:57692"/>
    </ligand>
</feature>
<feature type="mutagenesis site" description="No activity." evidence="1">
    <original>R</original>
    <variation>Q</variation>
    <variation>S</variation>
    <location>
        <position position="64"/>
    </location>
</feature>
<feature type="mutagenesis site" description="Almost no effect on activity." evidence="1">
    <original>H</original>
    <variation>A</variation>
    <location>
        <position position="163"/>
    </location>
</feature>
<feature type="mutagenesis site" description="Retains 8% of wild-type activity." evidence="1">
    <original>H</original>
    <variation>N</variation>
    <location>
        <position position="163"/>
    </location>
</feature>
<feature type="mutagenesis site" description="Retains less than 2% of wild-type activity." evidence="1">
    <original>K</original>
    <variation>Q</variation>
    <variation>S</variation>
    <location>
        <position position="269"/>
    </location>
</feature>
<feature type="mutagenesis site" description="Retains 5% of wild-type activity." evidence="1">
    <original>Y</original>
    <variation>A</variation>
    <location>
        <position position="309"/>
    </location>
</feature>
<feature type="mutagenesis site" description="Retains 50% of wild-type activity." evidence="1">
    <original>V</original>
    <variation>A</variation>
    <location>
        <position position="363"/>
    </location>
</feature>
<feature type="mutagenesis site" description="Retains 17% of wild-type activity." evidence="1">
    <original>V</original>
    <variation>Q</variation>
    <location>
        <position position="363"/>
    </location>
</feature>
<feature type="mutagenesis site" description="No activity." evidence="1">
    <original>W</original>
    <variation>A</variation>
    <location>
        <position position="397"/>
    </location>
</feature>
<feature type="mutagenesis site" description="Retains 60% of wild-type activity." evidence="1">
    <original>W</original>
    <variation>Y</variation>
    <location>
        <position position="397"/>
    </location>
</feature>
<feature type="sequence conflict" description="In Ref. 1; AAD51808." evidence="2" ref="1">
    <original>V</original>
    <variation>A</variation>
    <location>
        <position position="344"/>
    </location>
</feature>
<feature type="strand" evidence="3">
    <location>
        <begin position="4"/>
        <end position="10"/>
    </location>
</feature>
<feature type="helix" evidence="3">
    <location>
        <begin position="14"/>
        <end position="24"/>
    </location>
</feature>
<feature type="helix" evidence="3">
    <location>
        <begin position="27"/>
        <end position="29"/>
    </location>
</feature>
<feature type="strand" evidence="3">
    <location>
        <begin position="34"/>
        <end position="43"/>
    </location>
</feature>
<feature type="strand" evidence="3">
    <location>
        <begin position="49"/>
        <end position="52"/>
    </location>
</feature>
<feature type="turn" evidence="3">
    <location>
        <begin position="53"/>
        <end position="55"/>
    </location>
</feature>
<feature type="strand" evidence="3">
    <location>
        <begin position="56"/>
        <end position="61"/>
    </location>
</feature>
<feature type="turn" evidence="3">
    <location>
        <begin position="67"/>
        <end position="69"/>
    </location>
</feature>
<feature type="helix" evidence="3">
    <location>
        <begin position="71"/>
        <end position="79"/>
    </location>
</feature>
<feature type="strand" evidence="3">
    <location>
        <begin position="84"/>
        <end position="86"/>
    </location>
</feature>
<feature type="helix" evidence="3">
    <location>
        <begin position="97"/>
        <end position="109"/>
    </location>
</feature>
<feature type="helix" evidence="3">
    <location>
        <begin position="110"/>
        <end position="112"/>
    </location>
</feature>
<feature type="helix" evidence="3">
    <location>
        <begin position="113"/>
        <end position="116"/>
    </location>
</feature>
<feature type="helix" evidence="3">
    <location>
        <begin position="121"/>
        <end position="129"/>
    </location>
</feature>
<feature type="helix" evidence="3">
    <location>
        <begin position="131"/>
        <end position="139"/>
    </location>
</feature>
<feature type="helix" evidence="3">
    <location>
        <begin position="144"/>
        <end position="147"/>
    </location>
</feature>
<feature type="strand" evidence="5">
    <location>
        <begin position="149"/>
        <end position="152"/>
    </location>
</feature>
<feature type="helix" evidence="3">
    <location>
        <begin position="153"/>
        <end position="161"/>
    </location>
</feature>
<feature type="turn" evidence="3">
    <location>
        <begin position="164"/>
        <end position="166"/>
    </location>
</feature>
<feature type="helix" evidence="3">
    <location>
        <begin position="167"/>
        <end position="170"/>
    </location>
</feature>
<feature type="strand" evidence="3">
    <location>
        <begin position="178"/>
        <end position="182"/>
    </location>
</feature>
<feature type="helix" evidence="3">
    <location>
        <begin position="185"/>
        <end position="197"/>
    </location>
</feature>
<feature type="strand" evidence="3">
    <location>
        <begin position="201"/>
        <end position="204"/>
    </location>
</feature>
<feature type="strand" evidence="3">
    <location>
        <begin position="206"/>
        <end position="214"/>
    </location>
</feature>
<feature type="strand" evidence="3">
    <location>
        <begin position="217"/>
        <end position="224"/>
    </location>
</feature>
<feature type="strand" evidence="3">
    <location>
        <begin position="229"/>
        <end position="239"/>
    </location>
</feature>
<feature type="helix" evidence="3">
    <location>
        <begin position="243"/>
        <end position="247"/>
    </location>
</feature>
<feature type="strand" evidence="3">
    <location>
        <begin position="249"/>
        <end position="251"/>
    </location>
</feature>
<feature type="turn" evidence="3">
    <location>
        <begin position="253"/>
        <end position="257"/>
    </location>
</feature>
<feature type="strand" evidence="3">
    <location>
        <begin position="262"/>
        <end position="273"/>
    </location>
</feature>
<feature type="helix" evidence="3">
    <location>
        <begin position="278"/>
        <end position="282"/>
    </location>
</feature>
<feature type="strand" evidence="3">
    <location>
        <begin position="288"/>
        <end position="290"/>
    </location>
</feature>
<feature type="strand" evidence="4">
    <location>
        <begin position="292"/>
        <end position="295"/>
    </location>
</feature>
<feature type="strand" evidence="3">
    <location>
        <begin position="297"/>
        <end position="301"/>
    </location>
</feature>
<feature type="turn" evidence="3">
    <location>
        <begin position="302"/>
        <end position="304"/>
    </location>
</feature>
<feature type="strand" evidence="3">
    <location>
        <begin position="305"/>
        <end position="311"/>
    </location>
</feature>
<feature type="helix" evidence="3">
    <location>
        <begin position="312"/>
        <end position="324"/>
    </location>
</feature>
<feature type="helix" evidence="3">
    <location>
        <begin position="326"/>
        <end position="341"/>
    </location>
</feature>
<feature type="helix" evidence="3">
    <location>
        <begin position="345"/>
        <end position="347"/>
    </location>
</feature>
<feature type="strand" evidence="3">
    <location>
        <begin position="352"/>
        <end position="366"/>
    </location>
</feature>
<feature type="strand" evidence="3">
    <location>
        <begin position="375"/>
        <end position="378"/>
    </location>
</feature>
<feature type="turn" evidence="3">
    <location>
        <begin position="380"/>
        <end position="382"/>
    </location>
</feature>
<feature type="strand" evidence="3">
    <location>
        <begin position="385"/>
        <end position="387"/>
    </location>
</feature>
<feature type="helix" evidence="3">
    <location>
        <begin position="389"/>
        <end position="391"/>
    </location>
</feature>
<feature type="turn" evidence="3">
    <location>
        <begin position="393"/>
        <end position="396"/>
    </location>
</feature>
<feature type="helix" evidence="3">
    <location>
        <begin position="398"/>
        <end position="417"/>
    </location>
</feature>
<keyword id="KW-0002">3D-structure</keyword>
<keyword id="KW-0045">Antibiotic biosynthesis</keyword>
<keyword id="KW-0274">FAD</keyword>
<keyword id="KW-0285">Flavoprotein</keyword>
<keyword id="KW-0460">Magnesium</keyword>
<keyword id="KW-0479">Metal-binding</keyword>
<keyword id="KW-0560">Oxidoreductase</keyword>
<keyword id="KW-1185">Reference proteome</keyword>
<name>VIOA_CHRVO</name>
<gene>
    <name type="primary">vioA</name>
    <name type="ordered locus">CV_3274</name>
</gene>
<comment type="function">
    <text evidence="1">The enzyme generates the imine form of indole 3-pyruvate (IPA) from L-tryptophan (L-Trp), with concomitant two-electron reduction of O(2) to H(2)O(2).</text>
</comment>
<comment type="catalytic activity">
    <reaction evidence="1">
        <text>L-tryptophan + O2 = 2-iminio-3-(indol-3-yl)propanoate + H2O2</text>
        <dbReference type="Rhea" id="RHEA:49024"/>
        <dbReference type="ChEBI" id="CHEBI:15379"/>
        <dbReference type="ChEBI" id="CHEBI:16240"/>
        <dbReference type="ChEBI" id="CHEBI:57912"/>
        <dbReference type="ChEBI" id="CHEBI:59193"/>
        <dbReference type="EC" id="1.4.3.23"/>
    </reaction>
</comment>
<comment type="catalytic activity">
    <reaction evidence="1">
        <text>7-chloro-L-tryptophan + O2 = 3-(7-chloroindol-3-yl)-2-iminopropanoate + H2O2</text>
        <dbReference type="Rhea" id="RHEA:27302"/>
        <dbReference type="ChEBI" id="CHEBI:15379"/>
        <dbReference type="ChEBI" id="CHEBI:16240"/>
        <dbReference type="ChEBI" id="CHEBI:58713"/>
        <dbReference type="ChEBI" id="CHEBI:59194"/>
        <dbReference type="EC" id="1.4.3.23"/>
    </reaction>
</comment>
<comment type="cofactor">
    <cofactor evidence="1">
        <name>FAD</name>
        <dbReference type="ChEBI" id="CHEBI:57692"/>
    </cofactor>
    <text evidence="1">Binds 1 FAD per subunit.</text>
</comment>
<comment type="cofactor">
    <cofactor evidence="1">
        <name>Mg(2+)</name>
        <dbReference type="ChEBI" id="CHEBI:18420"/>
    </cofactor>
    <text evidence="1">Binds 1 Mg(2+) ion per subunit.</text>
</comment>
<comment type="pathway">
    <text>Pigment biosynthesis; violacein biosynthesis.</text>
</comment>
<comment type="subunit">
    <text evidence="1">Homodimer.</text>
</comment>
<comment type="induction">
    <text>By N-acylhomoserine lactone (AHL).</text>
</comment>
<comment type="biotechnology">
    <text>Violacein production is used as a biosensor for the detection of quorum-sensing AHL production. Violacein possesses antibacterial, antiviral, antimicrobial, antileishmanial, trypanocidal and potential antitumoral activities.</text>
</comment>
<comment type="similarity">
    <text evidence="2">Belongs to the flavin monoamine oxidase family.</text>
</comment>
<dbReference type="EC" id="1.4.3.23" evidence="1"/>
<dbReference type="EMBL" id="AF172851">
    <property type="protein sequence ID" value="AAD51808.1"/>
    <property type="molecule type" value="Genomic_DNA"/>
</dbReference>
<dbReference type="EMBL" id="AB032799">
    <property type="protein sequence ID" value="BAA84782.1"/>
    <property type="molecule type" value="Genomic_DNA"/>
</dbReference>
<dbReference type="EMBL" id="AE016825">
    <property type="protein sequence ID" value="AAQ60938.1"/>
    <property type="molecule type" value="Genomic_DNA"/>
</dbReference>
<dbReference type="RefSeq" id="WP_011136821.1">
    <property type="nucleotide sequence ID" value="NC_005085.1"/>
</dbReference>
<dbReference type="PDB" id="5G3S">
    <property type="method" value="X-ray"/>
    <property type="resolution" value="2.08 A"/>
    <property type="chains" value="A/B=1-418"/>
</dbReference>
<dbReference type="PDB" id="5G3T">
    <property type="method" value="X-ray"/>
    <property type="resolution" value="1.80 A"/>
    <property type="chains" value="A/B/C/D=1-418"/>
</dbReference>
<dbReference type="PDB" id="5G3U">
    <property type="method" value="X-ray"/>
    <property type="resolution" value="2.38 A"/>
    <property type="chains" value="A/B=1-418"/>
</dbReference>
<dbReference type="PDB" id="5ZBC">
    <property type="method" value="X-ray"/>
    <property type="resolution" value="2.20 A"/>
    <property type="chains" value="A/B=1-418"/>
</dbReference>
<dbReference type="PDB" id="5ZBD">
    <property type="method" value="X-ray"/>
    <property type="resolution" value="1.80 A"/>
    <property type="chains" value="A/B=1-418"/>
</dbReference>
<dbReference type="PDB" id="6ESD">
    <property type="method" value="X-ray"/>
    <property type="resolution" value="2.60 A"/>
    <property type="chains" value="A/B=2-417"/>
</dbReference>
<dbReference type="PDB" id="6FW7">
    <property type="method" value="X-ray"/>
    <property type="resolution" value="3.00 A"/>
    <property type="chains" value="A/B=2-418"/>
</dbReference>
<dbReference type="PDB" id="6FW8">
    <property type="method" value="X-ray"/>
    <property type="resolution" value="2.40 A"/>
    <property type="chains" value="A/B=2-418"/>
</dbReference>
<dbReference type="PDB" id="6FW9">
    <property type="method" value="X-ray"/>
    <property type="resolution" value="2.74 A"/>
    <property type="chains" value="A/B=2-418"/>
</dbReference>
<dbReference type="PDB" id="6FWA">
    <property type="method" value="X-ray"/>
    <property type="resolution" value="2.85 A"/>
    <property type="chains" value="A/B=2-418"/>
</dbReference>
<dbReference type="PDB" id="6G2P">
    <property type="method" value="X-ray"/>
    <property type="resolution" value="2.60 A"/>
    <property type="chains" value="A/B=2-418"/>
</dbReference>
<dbReference type="PDBsum" id="5G3S"/>
<dbReference type="PDBsum" id="5G3T"/>
<dbReference type="PDBsum" id="5G3U"/>
<dbReference type="PDBsum" id="5ZBC"/>
<dbReference type="PDBsum" id="5ZBD"/>
<dbReference type="PDBsum" id="6ESD"/>
<dbReference type="PDBsum" id="6FW7"/>
<dbReference type="PDBsum" id="6FW8"/>
<dbReference type="PDBsum" id="6FW9"/>
<dbReference type="PDBsum" id="6FWA"/>
<dbReference type="PDBsum" id="6G2P"/>
<dbReference type="SMR" id="Q9S3V1"/>
<dbReference type="STRING" id="243365.CV_3274"/>
<dbReference type="KEGG" id="cvi:CV_3274"/>
<dbReference type="eggNOG" id="COG1231">
    <property type="taxonomic scope" value="Bacteria"/>
</dbReference>
<dbReference type="HOGENOM" id="CLU_650243_0_0_4"/>
<dbReference type="OrthoDB" id="8697246at2"/>
<dbReference type="BioCyc" id="MetaCyc:MONOMER-17361"/>
<dbReference type="UniPathway" id="UPA00309"/>
<dbReference type="Proteomes" id="UP000001424">
    <property type="component" value="Chromosome"/>
</dbReference>
<dbReference type="GO" id="GO:0046872">
    <property type="term" value="F:metal ion binding"/>
    <property type="evidence" value="ECO:0007669"/>
    <property type="project" value="UniProtKB-KW"/>
</dbReference>
<dbReference type="GO" id="GO:0016491">
    <property type="term" value="F:oxidoreductase activity"/>
    <property type="evidence" value="ECO:0007669"/>
    <property type="project" value="UniProtKB-KW"/>
</dbReference>
<dbReference type="GO" id="GO:0017000">
    <property type="term" value="P:antibiotic biosynthetic process"/>
    <property type="evidence" value="ECO:0007669"/>
    <property type="project" value="UniProtKB-KW"/>
</dbReference>
<dbReference type="Gene3D" id="3.50.50.60">
    <property type="entry name" value="FAD/NAD(P)-binding domain"/>
    <property type="match status" value="1"/>
</dbReference>
<dbReference type="InterPro" id="IPR002937">
    <property type="entry name" value="Amino_oxidase"/>
</dbReference>
<dbReference type="InterPro" id="IPR036188">
    <property type="entry name" value="FAD/NAD-bd_sf"/>
</dbReference>
<dbReference type="InterPro" id="IPR050464">
    <property type="entry name" value="Zeta_carotene_desat/Oxidored"/>
</dbReference>
<dbReference type="PANTHER" id="PTHR42923">
    <property type="entry name" value="PROTOPORPHYRINOGEN OXIDASE"/>
    <property type="match status" value="1"/>
</dbReference>
<dbReference type="Pfam" id="PF01593">
    <property type="entry name" value="Amino_oxidase"/>
    <property type="match status" value="1"/>
</dbReference>
<dbReference type="SUPFAM" id="SSF51905">
    <property type="entry name" value="FAD/NAD(P)-binding domain"/>
    <property type="match status" value="1"/>
</dbReference>
<proteinExistence type="evidence at protein level"/>